<proteinExistence type="inferred from homology"/>
<dbReference type="EC" id="6.1.1.4" evidence="1"/>
<dbReference type="EMBL" id="CP000494">
    <property type="protein sequence ID" value="ABQ32468.1"/>
    <property type="molecule type" value="Genomic_DNA"/>
</dbReference>
<dbReference type="RefSeq" id="WP_011942689.1">
    <property type="nucleotide sequence ID" value="NC_009485.1"/>
</dbReference>
<dbReference type="SMR" id="A5E8H4"/>
<dbReference type="STRING" id="288000.BBta_0171"/>
<dbReference type="KEGG" id="bbt:BBta_0171"/>
<dbReference type="eggNOG" id="COG0495">
    <property type="taxonomic scope" value="Bacteria"/>
</dbReference>
<dbReference type="HOGENOM" id="CLU_004427_0_0_5"/>
<dbReference type="OrthoDB" id="9810365at2"/>
<dbReference type="Proteomes" id="UP000000246">
    <property type="component" value="Chromosome"/>
</dbReference>
<dbReference type="GO" id="GO:0005829">
    <property type="term" value="C:cytosol"/>
    <property type="evidence" value="ECO:0007669"/>
    <property type="project" value="TreeGrafter"/>
</dbReference>
<dbReference type="GO" id="GO:0002161">
    <property type="term" value="F:aminoacyl-tRNA deacylase activity"/>
    <property type="evidence" value="ECO:0007669"/>
    <property type="project" value="InterPro"/>
</dbReference>
<dbReference type="GO" id="GO:0005524">
    <property type="term" value="F:ATP binding"/>
    <property type="evidence" value="ECO:0007669"/>
    <property type="project" value="UniProtKB-UniRule"/>
</dbReference>
<dbReference type="GO" id="GO:0004823">
    <property type="term" value="F:leucine-tRNA ligase activity"/>
    <property type="evidence" value="ECO:0007669"/>
    <property type="project" value="UniProtKB-UniRule"/>
</dbReference>
<dbReference type="GO" id="GO:0006429">
    <property type="term" value="P:leucyl-tRNA aminoacylation"/>
    <property type="evidence" value="ECO:0007669"/>
    <property type="project" value="UniProtKB-UniRule"/>
</dbReference>
<dbReference type="CDD" id="cd07958">
    <property type="entry name" value="Anticodon_Ia_Leu_BEm"/>
    <property type="match status" value="1"/>
</dbReference>
<dbReference type="CDD" id="cd00812">
    <property type="entry name" value="LeuRS_core"/>
    <property type="match status" value="1"/>
</dbReference>
<dbReference type="FunFam" id="1.10.730.10:FF:000002">
    <property type="entry name" value="Leucine--tRNA ligase"/>
    <property type="match status" value="1"/>
</dbReference>
<dbReference type="FunFam" id="3.10.20.590:FF:000001">
    <property type="entry name" value="Leucine--tRNA ligase"/>
    <property type="match status" value="1"/>
</dbReference>
<dbReference type="FunFam" id="3.40.50.620:FF:000003">
    <property type="entry name" value="Leucine--tRNA ligase"/>
    <property type="match status" value="1"/>
</dbReference>
<dbReference type="Gene3D" id="2.20.28.290">
    <property type="match status" value="1"/>
</dbReference>
<dbReference type="Gene3D" id="3.10.20.590">
    <property type="match status" value="1"/>
</dbReference>
<dbReference type="Gene3D" id="3.40.50.620">
    <property type="entry name" value="HUPs"/>
    <property type="match status" value="2"/>
</dbReference>
<dbReference type="Gene3D" id="1.10.730.10">
    <property type="entry name" value="Isoleucyl-tRNA Synthetase, Domain 1"/>
    <property type="match status" value="1"/>
</dbReference>
<dbReference type="HAMAP" id="MF_00049_B">
    <property type="entry name" value="Leu_tRNA_synth_B"/>
    <property type="match status" value="1"/>
</dbReference>
<dbReference type="InterPro" id="IPR001412">
    <property type="entry name" value="aa-tRNA-synth_I_CS"/>
</dbReference>
<dbReference type="InterPro" id="IPR002300">
    <property type="entry name" value="aa-tRNA-synth_Ia"/>
</dbReference>
<dbReference type="InterPro" id="IPR002302">
    <property type="entry name" value="Leu-tRNA-ligase"/>
</dbReference>
<dbReference type="InterPro" id="IPR025709">
    <property type="entry name" value="Leu_tRNA-synth_edit"/>
</dbReference>
<dbReference type="InterPro" id="IPR013155">
    <property type="entry name" value="M/V/L/I-tRNA-synth_anticd-bd"/>
</dbReference>
<dbReference type="InterPro" id="IPR015413">
    <property type="entry name" value="Methionyl/Leucyl_tRNA_Synth"/>
</dbReference>
<dbReference type="InterPro" id="IPR014729">
    <property type="entry name" value="Rossmann-like_a/b/a_fold"/>
</dbReference>
<dbReference type="InterPro" id="IPR009080">
    <property type="entry name" value="tRNAsynth_Ia_anticodon-bd"/>
</dbReference>
<dbReference type="InterPro" id="IPR009008">
    <property type="entry name" value="Val/Leu/Ile-tRNA-synth_edit"/>
</dbReference>
<dbReference type="NCBIfam" id="TIGR00396">
    <property type="entry name" value="leuS_bact"/>
    <property type="match status" value="1"/>
</dbReference>
<dbReference type="PANTHER" id="PTHR43740:SF2">
    <property type="entry name" value="LEUCINE--TRNA LIGASE, MITOCHONDRIAL"/>
    <property type="match status" value="1"/>
</dbReference>
<dbReference type="PANTHER" id="PTHR43740">
    <property type="entry name" value="LEUCYL-TRNA SYNTHETASE"/>
    <property type="match status" value="1"/>
</dbReference>
<dbReference type="Pfam" id="PF08264">
    <property type="entry name" value="Anticodon_1"/>
    <property type="match status" value="1"/>
</dbReference>
<dbReference type="Pfam" id="PF00133">
    <property type="entry name" value="tRNA-synt_1"/>
    <property type="match status" value="2"/>
</dbReference>
<dbReference type="Pfam" id="PF13603">
    <property type="entry name" value="tRNA-synt_1_2"/>
    <property type="match status" value="1"/>
</dbReference>
<dbReference type="Pfam" id="PF09334">
    <property type="entry name" value="tRNA-synt_1g"/>
    <property type="match status" value="1"/>
</dbReference>
<dbReference type="PRINTS" id="PR00985">
    <property type="entry name" value="TRNASYNTHLEU"/>
</dbReference>
<dbReference type="SUPFAM" id="SSF47323">
    <property type="entry name" value="Anticodon-binding domain of a subclass of class I aminoacyl-tRNA synthetases"/>
    <property type="match status" value="1"/>
</dbReference>
<dbReference type="SUPFAM" id="SSF52374">
    <property type="entry name" value="Nucleotidylyl transferase"/>
    <property type="match status" value="1"/>
</dbReference>
<dbReference type="SUPFAM" id="SSF50677">
    <property type="entry name" value="ValRS/IleRS/LeuRS editing domain"/>
    <property type="match status" value="1"/>
</dbReference>
<dbReference type="PROSITE" id="PS00178">
    <property type="entry name" value="AA_TRNA_LIGASE_I"/>
    <property type="match status" value="1"/>
</dbReference>
<keyword id="KW-0030">Aminoacyl-tRNA synthetase</keyword>
<keyword id="KW-0067">ATP-binding</keyword>
<keyword id="KW-0963">Cytoplasm</keyword>
<keyword id="KW-0436">Ligase</keyword>
<keyword id="KW-0547">Nucleotide-binding</keyword>
<keyword id="KW-0648">Protein biosynthesis</keyword>
<keyword id="KW-1185">Reference proteome</keyword>
<name>SYL_BRASB</name>
<organism>
    <name type="scientific">Bradyrhizobium sp. (strain BTAi1 / ATCC BAA-1182)</name>
    <dbReference type="NCBI Taxonomy" id="288000"/>
    <lineage>
        <taxon>Bacteria</taxon>
        <taxon>Pseudomonadati</taxon>
        <taxon>Pseudomonadota</taxon>
        <taxon>Alphaproteobacteria</taxon>
        <taxon>Hyphomicrobiales</taxon>
        <taxon>Nitrobacteraceae</taxon>
        <taxon>Bradyrhizobium</taxon>
    </lineage>
</organism>
<accession>A5E8H4</accession>
<reference key="1">
    <citation type="journal article" date="2007" name="Science">
        <title>Legumes symbioses: absence of nod genes in photosynthetic bradyrhizobia.</title>
        <authorList>
            <person name="Giraud E."/>
            <person name="Moulin L."/>
            <person name="Vallenet D."/>
            <person name="Barbe V."/>
            <person name="Cytryn E."/>
            <person name="Avarre J.-C."/>
            <person name="Jaubert M."/>
            <person name="Simon D."/>
            <person name="Cartieaux F."/>
            <person name="Prin Y."/>
            <person name="Bena G."/>
            <person name="Hannibal L."/>
            <person name="Fardoux J."/>
            <person name="Kojadinovic M."/>
            <person name="Vuillet L."/>
            <person name="Lajus A."/>
            <person name="Cruveiller S."/>
            <person name="Rouy Z."/>
            <person name="Mangenot S."/>
            <person name="Segurens B."/>
            <person name="Dossat C."/>
            <person name="Franck W.L."/>
            <person name="Chang W.-S."/>
            <person name="Saunders E."/>
            <person name="Bruce D."/>
            <person name="Richardson P."/>
            <person name="Normand P."/>
            <person name="Dreyfus B."/>
            <person name="Pignol D."/>
            <person name="Stacey G."/>
            <person name="Emerich D."/>
            <person name="Vermeglio A."/>
            <person name="Medigue C."/>
            <person name="Sadowsky M."/>
        </authorList>
    </citation>
    <scope>NUCLEOTIDE SEQUENCE [LARGE SCALE GENOMIC DNA]</scope>
    <source>
        <strain>BTAi1 / ATCC BAA-1182</strain>
    </source>
</reference>
<protein>
    <recommendedName>
        <fullName evidence="1">Leucine--tRNA ligase</fullName>
        <ecNumber evidence="1">6.1.1.4</ecNumber>
    </recommendedName>
    <alternativeName>
        <fullName evidence="1">Leucyl-tRNA synthetase</fullName>
        <shortName evidence="1">LeuRS</shortName>
    </alternativeName>
</protein>
<evidence type="ECO:0000255" key="1">
    <source>
        <dbReference type="HAMAP-Rule" id="MF_00049"/>
    </source>
</evidence>
<feature type="chain" id="PRO_1000009300" description="Leucine--tRNA ligase">
    <location>
        <begin position="1"/>
        <end position="874"/>
    </location>
</feature>
<feature type="short sequence motif" description="'HIGH' region">
    <location>
        <begin position="43"/>
        <end position="53"/>
    </location>
</feature>
<feature type="short sequence motif" description="'KMSKS' region">
    <location>
        <begin position="630"/>
        <end position="634"/>
    </location>
</feature>
<feature type="binding site" evidence="1">
    <location>
        <position position="633"/>
    </location>
    <ligand>
        <name>ATP</name>
        <dbReference type="ChEBI" id="CHEBI:30616"/>
    </ligand>
</feature>
<gene>
    <name evidence="1" type="primary">leuS</name>
    <name type="ordered locus">BBta_0171</name>
</gene>
<comment type="catalytic activity">
    <reaction evidence="1">
        <text>tRNA(Leu) + L-leucine + ATP = L-leucyl-tRNA(Leu) + AMP + diphosphate</text>
        <dbReference type="Rhea" id="RHEA:11688"/>
        <dbReference type="Rhea" id="RHEA-COMP:9613"/>
        <dbReference type="Rhea" id="RHEA-COMP:9622"/>
        <dbReference type="ChEBI" id="CHEBI:30616"/>
        <dbReference type="ChEBI" id="CHEBI:33019"/>
        <dbReference type="ChEBI" id="CHEBI:57427"/>
        <dbReference type="ChEBI" id="CHEBI:78442"/>
        <dbReference type="ChEBI" id="CHEBI:78494"/>
        <dbReference type="ChEBI" id="CHEBI:456215"/>
        <dbReference type="EC" id="6.1.1.4"/>
    </reaction>
</comment>
<comment type="subcellular location">
    <subcellularLocation>
        <location evidence="1">Cytoplasm</location>
    </subcellularLocation>
</comment>
<comment type="similarity">
    <text evidence="1">Belongs to the class-I aminoacyl-tRNA synthetase family.</text>
</comment>
<sequence>MTSERYNAREAEPRWQRQWDEKAIFATKNDDPRPKYYVLEMFPYPSGRIHIGHVRNYTLGDVLARFMRAKGFNVLHPMGWDAFGLPAENAAIERKVAPKAWTYDNIAAMKKQLRSIGLSLDWAREFATCDPSYYKHQQKMFLDFMQAGLVEREQRKVNWDPVDMTVLANEQVIDGRGWRSGAVVEQREMNQWVFKITKYSQELLDALDGLDRWPDKVRLMQRNWIGRSEGLLIRFALDPQTTPAGETELKIFTTRPDTLFGAKFMAISADHPLAQAAAAKNPELAAFIAEIKRIGTAQEAIDTAEKQGFDTGIRAVHPFDPSWTLPVYVANFVLMEYGTGAIFGCPAHDQRDLDFVNKYGLGNTPVVCPEGQDPASFVITDTAFDGDGRLINSRFLDGMTIAQAKDEVAKRLEAEQRGGAAVGERQVNFRLRDWGISRQRYWGCPIPVIHCPTCDVVPVPAKDLPVVLPDDVTFDKPGNALDHHPTWKHVTCPKCGGKATRETDTMDTFVDSSWYFARFTDPWNETAPTTPDVANRMMPVDQYIGGVEHAILHLLYSRFFTRAMKATGHVAMDEPFAGMFTQGMVVHETYQKADGTYVNPAEVKIEVGGNGRRAVLTATGEDITIGPIEKMSKSKKNTVDPDDIIESYGADVARWFMLSDSPPDRDVIWSDERVQGAARFVQRLWRLVNESVAAGQEAPSSRPATFGPDALALRKAAHGALDKVTGGIERLHFNVCLAHIREFANALAEVLARPAKPAPDLAWAIREAAQILVQLFSPMMPHLAEECWQVLGQGGLISEASWPQIERDLLVEDSVTLVVQVNGKKRGEVTVASNAQNPEIESAVLALDAVKLALDGKPVRKVIIVPKRIVNVVG</sequence>